<comment type="cofactor">
    <cofactor evidence="1">
        <name>FAD</name>
        <dbReference type="ChEBI" id="CHEBI:57692"/>
    </cofactor>
</comment>
<comment type="similarity">
    <text evidence="3">Belongs to the GMC oxidoreductase family.</text>
</comment>
<reference key="1">
    <citation type="journal article" date="1997" name="Nature">
        <title>Molecular basis of symbiosis between Rhizobium and legumes.</title>
        <authorList>
            <person name="Freiberg C.A."/>
            <person name="Fellay R."/>
            <person name="Bairoch A."/>
            <person name="Broughton W.J."/>
            <person name="Rosenthal A."/>
            <person name="Perret X."/>
        </authorList>
    </citation>
    <scope>NUCLEOTIDE SEQUENCE [LARGE SCALE GENOMIC DNA]</scope>
    <source>
        <strain>NBRC 101917 / NGR234</strain>
    </source>
</reference>
<reference key="2">
    <citation type="journal article" date="2009" name="Appl. Environ. Microbiol.">
        <title>Rhizobium sp. strain NGR234 possesses a remarkable number of secretion systems.</title>
        <authorList>
            <person name="Schmeisser C."/>
            <person name="Liesegang H."/>
            <person name="Krysciak D."/>
            <person name="Bakkou N."/>
            <person name="Le Quere A."/>
            <person name="Wollherr A."/>
            <person name="Heinemeyer I."/>
            <person name="Morgenstern B."/>
            <person name="Pommerening-Roeser A."/>
            <person name="Flores M."/>
            <person name="Palacios R."/>
            <person name="Brenner S."/>
            <person name="Gottschalk G."/>
            <person name="Schmitz R.A."/>
            <person name="Broughton W.J."/>
            <person name="Perret X."/>
            <person name="Strittmatter A.W."/>
            <person name="Streit W.R."/>
        </authorList>
    </citation>
    <scope>NUCLEOTIDE SEQUENCE [LARGE SCALE GENOMIC DNA]</scope>
    <source>
        <strain>NBRC 101917 / NGR234</strain>
    </source>
</reference>
<accession>P55582</accession>
<protein>
    <recommendedName>
        <fullName>Uncharacterized GMC-type oxidoreductase y4nJ</fullName>
        <ecNumber>1.1.-.-</ecNumber>
    </recommendedName>
</protein>
<proteinExistence type="inferred from homology"/>
<feature type="chain" id="PRO_0000205618" description="Uncharacterized GMC-type oxidoreductase y4nJ">
    <location>
        <begin position="1"/>
        <end position="505"/>
    </location>
</feature>
<feature type="active site" description="Proton acceptor" evidence="2">
    <location>
        <position position="431"/>
    </location>
</feature>
<keyword id="KW-0274">FAD</keyword>
<keyword id="KW-0285">Flavoprotein</keyword>
<keyword id="KW-0560">Oxidoreductase</keyword>
<keyword id="KW-0614">Plasmid</keyword>
<keyword id="KW-1185">Reference proteome</keyword>
<gene>
    <name type="ordered locus">NGR_a02320</name>
    <name type="ORF">y4nJ</name>
</gene>
<name>Y4NJ_SINFN</name>
<dbReference type="EC" id="1.1.-.-"/>
<dbReference type="EMBL" id="U00090">
    <property type="protein sequence ID" value="AAB91789.1"/>
    <property type="molecule type" value="Genomic_DNA"/>
</dbReference>
<dbReference type="RefSeq" id="NP_443993.1">
    <property type="nucleotide sequence ID" value="NC_000914.2"/>
</dbReference>
<dbReference type="SMR" id="P55582"/>
<dbReference type="KEGG" id="rhi:NGR_a02320"/>
<dbReference type="PATRIC" id="fig|394.7.peg.245"/>
<dbReference type="eggNOG" id="COG2303">
    <property type="taxonomic scope" value="Bacteria"/>
</dbReference>
<dbReference type="HOGENOM" id="CLU_008878_3_0_5"/>
<dbReference type="OrthoDB" id="9787779at2"/>
<dbReference type="Proteomes" id="UP000001054">
    <property type="component" value="Plasmid pNGR234a"/>
</dbReference>
<dbReference type="GO" id="GO:0050660">
    <property type="term" value="F:flavin adenine dinucleotide binding"/>
    <property type="evidence" value="ECO:0007669"/>
    <property type="project" value="InterPro"/>
</dbReference>
<dbReference type="GO" id="GO:0016614">
    <property type="term" value="F:oxidoreductase activity, acting on CH-OH group of donors"/>
    <property type="evidence" value="ECO:0007669"/>
    <property type="project" value="InterPro"/>
</dbReference>
<dbReference type="Gene3D" id="3.50.50.60">
    <property type="entry name" value="FAD/NAD(P)-binding domain"/>
    <property type="match status" value="2"/>
</dbReference>
<dbReference type="InterPro" id="IPR036188">
    <property type="entry name" value="FAD/NAD-bd_sf"/>
</dbReference>
<dbReference type="InterPro" id="IPR012132">
    <property type="entry name" value="GMC_OxRdtase"/>
</dbReference>
<dbReference type="InterPro" id="IPR000172">
    <property type="entry name" value="GMC_OxRdtase_N"/>
</dbReference>
<dbReference type="InterPro" id="IPR007867">
    <property type="entry name" value="GMC_OxRtase_C"/>
</dbReference>
<dbReference type="PANTHER" id="PTHR46056">
    <property type="entry name" value="LONG-CHAIN-ALCOHOL OXIDASE"/>
    <property type="match status" value="1"/>
</dbReference>
<dbReference type="PANTHER" id="PTHR46056:SF12">
    <property type="entry name" value="LONG-CHAIN-ALCOHOL OXIDASE"/>
    <property type="match status" value="1"/>
</dbReference>
<dbReference type="Pfam" id="PF05199">
    <property type="entry name" value="GMC_oxred_C"/>
    <property type="match status" value="1"/>
</dbReference>
<dbReference type="Pfam" id="PF00732">
    <property type="entry name" value="GMC_oxred_N"/>
    <property type="match status" value="1"/>
</dbReference>
<dbReference type="PIRSF" id="PIRSF000137">
    <property type="entry name" value="Alcohol_oxidase"/>
    <property type="match status" value="1"/>
</dbReference>
<dbReference type="SUPFAM" id="SSF51905">
    <property type="entry name" value="FAD/NAD(P)-binding domain"/>
    <property type="match status" value="1"/>
</dbReference>
<dbReference type="PROSITE" id="PS00623">
    <property type="entry name" value="GMC_OXRED_1"/>
    <property type="match status" value="1"/>
</dbReference>
<sequence length="505" mass="54001">MKGGFSLNSELQLEADAVIIGSGAGGASVADVLTAAGLYVIMLEEGGHVPSSSASPFASEAFAAAWRGGGLTAAIGRPPIAYAEGRCVGGGTEINSAIAQRADSDLLDQWRKLYKIENFTPDELSQYYGRAETTVNASLTPGPLGRPTDILRLGGEALGWKVSELKRGQRDCKGANRCSFICPNGAKQSMAVTLLPKSMDRGMRLLARTRVDKIRIEKGRAAVVVAQLQDAGGQGVHVRVKAGLVFVCAGAIHTPALLRRSGLRKRIGDTLRIHPTIRATALFDEPVDAHQSRLPLTAVTEFMPEQRIGGSVFTPAVFGLSLAEDWTNRGDLMQAWRLCGSYYGMIRPRGVGSVRPLPGINEPLVSFKLAPEDWISLGQVLTLLGQAMFAAGARKVIPSISGHEGWTNPDEVDEFRNKPLPEKATNLMTIHLFSTCPPGEHRDACAVDSYGRVRGVENLFVADGSVIPEAPGVNPQMTIMALAFRIAEAALSHSSRERAQSAARE</sequence>
<organism>
    <name type="scientific">Sinorhizobium fredii (strain NBRC 101917 / NGR234)</name>
    <dbReference type="NCBI Taxonomy" id="394"/>
    <lineage>
        <taxon>Bacteria</taxon>
        <taxon>Pseudomonadati</taxon>
        <taxon>Pseudomonadota</taxon>
        <taxon>Alphaproteobacteria</taxon>
        <taxon>Hyphomicrobiales</taxon>
        <taxon>Rhizobiaceae</taxon>
        <taxon>Sinorhizobium/Ensifer group</taxon>
        <taxon>Sinorhizobium</taxon>
    </lineage>
</organism>
<evidence type="ECO:0000250" key="1"/>
<evidence type="ECO:0000250" key="2">
    <source>
        <dbReference type="UniProtKB" id="E4QP00"/>
    </source>
</evidence>
<evidence type="ECO:0000305" key="3"/>
<geneLocation type="plasmid">
    <name>sym pNGR234a</name>
</geneLocation>